<organism>
    <name type="scientific">Bacillus subtilis (strain 168)</name>
    <dbReference type="NCBI Taxonomy" id="224308"/>
    <lineage>
        <taxon>Bacteria</taxon>
        <taxon>Bacillati</taxon>
        <taxon>Bacillota</taxon>
        <taxon>Bacilli</taxon>
        <taxon>Bacillales</taxon>
        <taxon>Bacillaceae</taxon>
        <taxon>Bacillus</taxon>
    </lineage>
</organism>
<dbReference type="EMBL" id="AF008220">
    <property type="protein sequence ID" value="AAC00315.1"/>
    <property type="molecule type" value="Genomic_DNA"/>
</dbReference>
<dbReference type="EMBL" id="AL009126">
    <property type="protein sequence ID" value="CAB14928.1"/>
    <property type="molecule type" value="Genomic_DNA"/>
</dbReference>
<dbReference type="PIR" id="H69991">
    <property type="entry name" value="H69991"/>
</dbReference>
<dbReference type="RefSeq" id="WP_004398631.1">
    <property type="nucleotide sequence ID" value="NZ_OZ025638.1"/>
</dbReference>
<dbReference type="FunCoup" id="O34806">
    <property type="interactions" value="91"/>
</dbReference>
<dbReference type="STRING" id="224308.BSU29500"/>
<dbReference type="PaxDb" id="224308-BSU29500"/>
<dbReference type="EnsemblBacteria" id="CAB14928">
    <property type="protein sequence ID" value="CAB14928"/>
    <property type="gene ID" value="BSU_29500"/>
</dbReference>
<dbReference type="GeneID" id="937346"/>
<dbReference type="KEGG" id="bsu:BSU29500"/>
<dbReference type="PATRIC" id="fig|224308.179.peg.3205"/>
<dbReference type="eggNOG" id="COG3874">
    <property type="taxonomic scope" value="Bacteria"/>
</dbReference>
<dbReference type="InParanoid" id="O34806"/>
<dbReference type="OrthoDB" id="9796262at2"/>
<dbReference type="PhylomeDB" id="O34806"/>
<dbReference type="BioCyc" id="BSUB:BSU29500-MONOMER"/>
<dbReference type="Proteomes" id="UP000001570">
    <property type="component" value="Chromosome"/>
</dbReference>
<dbReference type="GO" id="GO:0030435">
    <property type="term" value="P:sporulation resulting in formation of a cellular spore"/>
    <property type="evidence" value="ECO:0007669"/>
    <property type="project" value="UniProtKB-KW"/>
</dbReference>
<dbReference type="InterPro" id="IPR014229">
    <property type="entry name" value="Spore_YtfJ"/>
</dbReference>
<dbReference type="NCBIfam" id="TIGR02874">
    <property type="entry name" value="spore_ytfJ"/>
    <property type="match status" value="1"/>
</dbReference>
<dbReference type="PANTHER" id="PTHR39162">
    <property type="entry name" value="GLL3345 PROTEIN"/>
    <property type="match status" value="1"/>
</dbReference>
<dbReference type="PANTHER" id="PTHR39162:SF1">
    <property type="entry name" value="SPORULATION PROTEIN YTFJ"/>
    <property type="match status" value="1"/>
</dbReference>
<dbReference type="Pfam" id="PF09579">
    <property type="entry name" value="Spore_YtfJ"/>
    <property type="match status" value="1"/>
</dbReference>
<dbReference type="PIRSF" id="PIRSF021377">
    <property type="entry name" value="YtfJ"/>
    <property type="match status" value="1"/>
</dbReference>
<name>YTFJ_BACSU</name>
<keyword id="KW-1185">Reference proteome</keyword>
<keyword id="KW-0749">Sporulation</keyword>
<protein>
    <recommendedName>
        <fullName>Uncharacterized spore protein YtfJ</fullName>
    </recommendedName>
</protein>
<sequence length="151" mass="16347">MADHPIQGLMKTAMENLKEMIDVNTIIGDPVETPDGSVILTVSKVGFGFAAGGSEFGGKPAEKKSEDDETREQKLPFGGGSGGGVSITPIAFLIVGSTGIRMLHLDENTHLIEKILDAAPQTLERIQQMFKKNNKNQSQGQNQNQMNNMNY</sequence>
<feature type="chain" id="PRO_0000389641" description="Uncharacterized spore protein YtfJ">
    <location>
        <begin position="1"/>
        <end position="151"/>
    </location>
</feature>
<feature type="region of interest" description="Disordered" evidence="1">
    <location>
        <begin position="51"/>
        <end position="84"/>
    </location>
</feature>
<feature type="compositionally biased region" description="Basic and acidic residues" evidence="1">
    <location>
        <begin position="60"/>
        <end position="74"/>
    </location>
</feature>
<evidence type="ECO:0000256" key="1">
    <source>
        <dbReference type="SAM" id="MobiDB-lite"/>
    </source>
</evidence>
<evidence type="ECO:0000269" key="2">
    <source>
    </source>
</evidence>
<evidence type="ECO:0000305" key="3">
    <source>
    </source>
</evidence>
<reference key="1">
    <citation type="journal article" date="1997" name="Microbiology">
        <title>Sequencing and functional annotation of the Bacillus subtilis genes in the 200 kb rrnB-dnaB region.</title>
        <authorList>
            <person name="Lapidus A."/>
            <person name="Galleron N."/>
            <person name="Sorokin A."/>
            <person name="Ehrlich S.D."/>
        </authorList>
    </citation>
    <scope>NUCLEOTIDE SEQUENCE [GENOMIC DNA]</scope>
    <source>
        <strain>168</strain>
    </source>
</reference>
<reference key="2">
    <citation type="journal article" date="1997" name="Nature">
        <title>The complete genome sequence of the Gram-positive bacterium Bacillus subtilis.</title>
        <authorList>
            <person name="Kunst F."/>
            <person name="Ogasawara N."/>
            <person name="Moszer I."/>
            <person name="Albertini A.M."/>
            <person name="Alloni G."/>
            <person name="Azevedo V."/>
            <person name="Bertero M.G."/>
            <person name="Bessieres P."/>
            <person name="Bolotin A."/>
            <person name="Borchert S."/>
            <person name="Borriss R."/>
            <person name="Boursier L."/>
            <person name="Brans A."/>
            <person name="Braun M."/>
            <person name="Brignell S.C."/>
            <person name="Bron S."/>
            <person name="Brouillet S."/>
            <person name="Bruschi C.V."/>
            <person name="Caldwell B."/>
            <person name="Capuano V."/>
            <person name="Carter N.M."/>
            <person name="Choi S.-K."/>
            <person name="Codani J.-J."/>
            <person name="Connerton I.F."/>
            <person name="Cummings N.J."/>
            <person name="Daniel R.A."/>
            <person name="Denizot F."/>
            <person name="Devine K.M."/>
            <person name="Duesterhoeft A."/>
            <person name="Ehrlich S.D."/>
            <person name="Emmerson P.T."/>
            <person name="Entian K.-D."/>
            <person name="Errington J."/>
            <person name="Fabret C."/>
            <person name="Ferrari E."/>
            <person name="Foulger D."/>
            <person name="Fritz C."/>
            <person name="Fujita M."/>
            <person name="Fujita Y."/>
            <person name="Fuma S."/>
            <person name="Galizzi A."/>
            <person name="Galleron N."/>
            <person name="Ghim S.-Y."/>
            <person name="Glaser P."/>
            <person name="Goffeau A."/>
            <person name="Golightly E.J."/>
            <person name="Grandi G."/>
            <person name="Guiseppi G."/>
            <person name="Guy B.J."/>
            <person name="Haga K."/>
            <person name="Haiech J."/>
            <person name="Harwood C.R."/>
            <person name="Henaut A."/>
            <person name="Hilbert H."/>
            <person name="Holsappel S."/>
            <person name="Hosono S."/>
            <person name="Hullo M.-F."/>
            <person name="Itaya M."/>
            <person name="Jones L.-M."/>
            <person name="Joris B."/>
            <person name="Karamata D."/>
            <person name="Kasahara Y."/>
            <person name="Klaerr-Blanchard M."/>
            <person name="Klein C."/>
            <person name="Kobayashi Y."/>
            <person name="Koetter P."/>
            <person name="Koningstein G."/>
            <person name="Krogh S."/>
            <person name="Kumano M."/>
            <person name="Kurita K."/>
            <person name="Lapidus A."/>
            <person name="Lardinois S."/>
            <person name="Lauber J."/>
            <person name="Lazarevic V."/>
            <person name="Lee S.-M."/>
            <person name="Levine A."/>
            <person name="Liu H."/>
            <person name="Masuda S."/>
            <person name="Mauel C."/>
            <person name="Medigue C."/>
            <person name="Medina N."/>
            <person name="Mellado R.P."/>
            <person name="Mizuno M."/>
            <person name="Moestl D."/>
            <person name="Nakai S."/>
            <person name="Noback M."/>
            <person name="Noone D."/>
            <person name="O'Reilly M."/>
            <person name="Ogawa K."/>
            <person name="Ogiwara A."/>
            <person name="Oudega B."/>
            <person name="Park S.-H."/>
            <person name="Parro V."/>
            <person name="Pohl T.M."/>
            <person name="Portetelle D."/>
            <person name="Porwollik S."/>
            <person name="Prescott A.M."/>
            <person name="Presecan E."/>
            <person name="Pujic P."/>
            <person name="Purnelle B."/>
            <person name="Rapoport G."/>
            <person name="Rey M."/>
            <person name="Reynolds S."/>
            <person name="Rieger M."/>
            <person name="Rivolta C."/>
            <person name="Rocha E."/>
            <person name="Roche B."/>
            <person name="Rose M."/>
            <person name="Sadaie Y."/>
            <person name="Sato T."/>
            <person name="Scanlan E."/>
            <person name="Schleich S."/>
            <person name="Schroeter R."/>
            <person name="Scoffone F."/>
            <person name="Sekiguchi J."/>
            <person name="Sekowska A."/>
            <person name="Seror S.J."/>
            <person name="Serror P."/>
            <person name="Shin B.-S."/>
            <person name="Soldo B."/>
            <person name="Sorokin A."/>
            <person name="Tacconi E."/>
            <person name="Takagi T."/>
            <person name="Takahashi H."/>
            <person name="Takemaru K."/>
            <person name="Takeuchi M."/>
            <person name="Tamakoshi A."/>
            <person name="Tanaka T."/>
            <person name="Terpstra P."/>
            <person name="Tognoni A."/>
            <person name="Tosato V."/>
            <person name="Uchiyama S."/>
            <person name="Vandenbol M."/>
            <person name="Vannier F."/>
            <person name="Vassarotti A."/>
            <person name="Viari A."/>
            <person name="Wambutt R."/>
            <person name="Wedler E."/>
            <person name="Wedler H."/>
            <person name="Weitzenegger T."/>
            <person name="Winters P."/>
            <person name="Wipat A."/>
            <person name="Yamamoto H."/>
            <person name="Yamane K."/>
            <person name="Yasumoto K."/>
            <person name="Yata K."/>
            <person name="Yoshida K."/>
            <person name="Yoshikawa H.-F."/>
            <person name="Zumstein E."/>
            <person name="Yoshikawa H."/>
            <person name="Danchin A."/>
        </authorList>
    </citation>
    <scope>NUCLEOTIDE SEQUENCE [LARGE SCALE GENOMIC DNA]</scope>
    <source>
        <strain>168</strain>
    </source>
</reference>
<reference key="3">
    <citation type="journal article" date="2002" name="Microbiology">
        <title>Proteomics characterization of novel spore proteins of Bacillus subtilis.</title>
        <authorList>
            <person name="Kuwana R."/>
            <person name="Kasahara Y."/>
            <person name="Fujibayashi M."/>
            <person name="Takamatsu H."/>
            <person name="Ogasawara N."/>
            <person name="Watabe K."/>
        </authorList>
    </citation>
    <scope>IDENTIFICATION BY MASS SPECTROMETRY</scope>
    <scope>SUBCELLULAR LOCATION</scope>
    <scope>DEVELOPMENTAL STAGE</scope>
    <scope>INDUCTION</scope>
    <source>
        <strain>168</strain>
    </source>
</reference>
<comment type="subcellular location">
    <subcellularLocation>
        <location evidence="3">Spore core</location>
    </subcellularLocation>
</comment>
<comment type="developmental stage">
    <text evidence="2">Could be expressed in the forespore during sporulation.</text>
</comment>
<comment type="induction">
    <text evidence="2">Expression is probably sigma F-dependent.</text>
</comment>
<proteinExistence type="evidence at protein level"/>
<accession>O34806</accession>
<accession>Q795U2</accession>
<gene>
    <name type="primary">ytfJ</name>
    <name type="ordered locus">BSU29500</name>
</gene>